<name>SUFS_PECAS</name>
<sequence>MSYPIERVRADFPLLASEVNGQPLAYLDSAASAQKPHSVIDREAEFYRHEYAAVHRGIHTLSAQATSAMEAVREKVASFINAASAEEIVFVRGTTEAINLVANSYGRTFIQPGDNLIITEMEHHANIVPWQMLAEAHGVEVRVLPLAEDGSLDVAQLPVLLDERTRLLAVTQISNVLGTLNPVKAMIAQAKAAGAVVLIDGAQSIMHQPVDVQDLDCDFFVFSGHKIYGPSGIGVLYGKRDLLQAMPPWEGGGAMIRQVSLRTGITYADSPWRFEAGSPNTGGIMGLGAALDYVTALGREDIQRYESSLMQYALEALTQVPDLTLYGPAERHGVIAFNLGQHHAYDVGSFLDRYGIAIRTGHHCAMPLMEHYGVPSMCRASLAVYTTREEIDRLVAGLQRIHRLLGS</sequence>
<dbReference type="EC" id="2.8.1.7" evidence="1"/>
<dbReference type="EC" id="4.4.1.16" evidence="1"/>
<dbReference type="EMBL" id="BX950851">
    <property type="protein sequence ID" value="CAG74766.1"/>
    <property type="molecule type" value="Genomic_DNA"/>
</dbReference>
<dbReference type="RefSeq" id="WP_011093433.1">
    <property type="nucleotide sequence ID" value="NC_004547.2"/>
</dbReference>
<dbReference type="SMR" id="Q6D625"/>
<dbReference type="STRING" id="218491.ECA1863"/>
<dbReference type="GeneID" id="57209430"/>
<dbReference type="KEGG" id="eca:ECA1863"/>
<dbReference type="PATRIC" id="fig|218491.5.peg.1892"/>
<dbReference type="eggNOG" id="COG0520">
    <property type="taxonomic scope" value="Bacteria"/>
</dbReference>
<dbReference type="HOGENOM" id="CLU_003433_2_5_6"/>
<dbReference type="OrthoDB" id="9808002at2"/>
<dbReference type="UniPathway" id="UPA00266"/>
<dbReference type="Proteomes" id="UP000007966">
    <property type="component" value="Chromosome"/>
</dbReference>
<dbReference type="GO" id="GO:0005737">
    <property type="term" value="C:cytoplasm"/>
    <property type="evidence" value="ECO:0007669"/>
    <property type="project" value="UniProtKB-SubCell"/>
</dbReference>
<dbReference type="GO" id="GO:0031071">
    <property type="term" value="F:cysteine desulfurase activity"/>
    <property type="evidence" value="ECO:0007669"/>
    <property type="project" value="UniProtKB-UniRule"/>
</dbReference>
<dbReference type="GO" id="GO:0030170">
    <property type="term" value="F:pyridoxal phosphate binding"/>
    <property type="evidence" value="ECO:0007669"/>
    <property type="project" value="InterPro"/>
</dbReference>
<dbReference type="GO" id="GO:0009000">
    <property type="term" value="F:selenocysteine lyase activity"/>
    <property type="evidence" value="ECO:0007669"/>
    <property type="project" value="UniProtKB-UniRule"/>
</dbReference>
<dbReference type="GO" id="GO:0006534">
    <property type="term" value="P:cysteine metabolic process"/>
    <property type="evidence" value="ECO:0007669"/>
    <property type="project" value="InterPro"/>
</dbReference>
<dbReference type="CDD" id="cd06453">
    <property type="entry name" value="SufS_like"/>
    <property type="match status" value="1"/>
</dbReference>
<dbReference type="Gene3D" id="3.90.1150.10">
    <property type="entry name" value="Aspartate Aminotransferase, domain 1"/>
    <property type="match status" value="1"/>
</dbReference>
<dbReference type="Gene3D" id="3.40.640.10">
    <property type="entry name" value="Type I PLP-dependent aspartate aminotransferase-like (Major domain)"/>
    <property type="match status" value="1"/>
</dbReference>
<dbReference type="HAMAP" id="MF_01831">
    <property type="entry name" value="SufS_aminotrans_5"/>
    <property type="match status" value="1"/>
</dbReference>
<dbReference type="InterPro" id="IPR000192">
    <property type="entry name" value="Aminotrans_V_dom"/>
</dbReference>
<dbReference type="InterPro" id="IPR020578">
    <property type="entry name" value="Aminotrans_V_PyrdxlP_BS"/>
</dbReference>
<dbReference type="InterPro" id="IPR010970">
    <property type="entry name" value="Cys_dSase_SufS"/>
</dbReference>
<dbReference type="InterPro" id="IPR016454">
    <property type="entry name" value="Cysteine_dSase"/>
</dbReference>
<dbReference type="InterPro" id="IPR015424">
    <property type="entry name" value="PyrdxlP-dep_Trfase"/>
</dbReference>
<dbReference type="InterPro" id="IPR015421">
    <property type="entry name" value="PyrdxlP-dep_Trfase_major"/>
</dbReference>
<dbReference type="InterPro" id="IPR015422">
    <property type="entry name" value="PyrdxlP-dep_Trfase_small"/>
</dbReference>
<dbReference type="NCBIfam" id="NF006791">
    <property type="entry name" value="PRK09295.1"/>
    <property type="match status" value="1"/>
</dbReference>
<dbReference type="NCBIfam" id="TIGR01979">
    <property type="entry name" value="sufS"/>
    <property type="match status" value="1"/>
</dbReference>
<dbReference type="PANTHER" id="PTHR43586">
    <property type="entry name" value="CYSTEINE DESULFURASE"/>
    <property type="match status" value="1"/>
</dbReference>
<dbReference type="PANTHER" id="PTHR43586:SF25">
    <property type="entry name" value="CYSTEINE DESULFURASE"/>
    <property type="match status" value="1"/>
</dbReference>
<dbReference type="Pfam" id="PF00266">
    <property type="entry name" value="Aminotran_5"/>
    <property type="match status" value="1"/>
</dbReference>
<dbReference type="PIRSF" id="PIRSF005572">
    <property type="entry name" value="NifS"/>
    <property type="match status" value="1"/>
</dbReference>
<dbReference type="SUPFAM" id="SSF53383">
    <property type="entry name" value="PLP-dependent transferases"/>
    <property type="match status" value="1"/>
</dbReference>
<dbReference type="PROSITE" id="PS00595">
    <property type="entry name" value="AA_TRANSFER_CLASS_5"/>
    <property type="match status" value="1"/>
</dbReference>
<organism>
    <name type="scientific">Pectobacterium atrosepticum (strain SCRI 1043 / ATCC BAA-672)</name>
    <name type="common">Erwinia carotovora subsp. atroseptica</name>
    <dbReference type="NCBI Taxonomy" id="218491"/>
    <lineage>
        <taxon>Bacteria</taxon>
        <taxon>Pseudomonadati</taxon>
        <taxon>Pseudomonadota</taxon>
        <taxon>Gammaproteobacteria</taxon>
        <taxon>Enterobacterales</taxon>
        <taxon>Pectobacteriaceae</taxon>
        <taxon>Pectobacterium</taxon>
    </lineage>
</organism>
<gene>
    <name evidence="1" type="primary">sufS</name>
    <name type="ordered locus">ECA1863</name>
</gene>
<accession>Q6D625</accession>
<evidence type="ECO:0000255" key="1">
    <source>
        <dbReference type="HAMAP-Rule" id="MF_01831"/>
    </source>
</evidence>
<protein>
    <recommendedName>
        <fullName evidence="1">Cysteine desulfurase</fullName>
        <ecNumber evidence="1">2.8.1.7</ecNumber>
    </recommendedName>
    <alternativeName>
        <fullName evidence="1">Selenocysteine beta-lyase</fullName>
        <shortName evidence="1">SCL</shortName>
    </alternativeName>
    <alternativeName>
        <fullName evidence="1">Selenocysteine lyase</fullName>
        <ecNumber evidence="1">4.4.1.16</ecNumber>
    </alternativeName>
    <alternativeName>
        <fullName evidence="1">Selenocysteine reductase</fullName>
    </alternativeName>
</protein>
<feature type="chain" id="PRO_0000150333" description="Cysteine desulfurase">
    <location>
        <begin position="1"/>
        <end position="407"/>
    </location>
</feature>
<feature type="active site" description="Cysteine persulfide intermediate" evidence="1">
    <location>
        <position position="364"/>
    </location>
</feature>
<feature type="modified residue" description="N6-(pyridoxal phosphate)lysine" evidence="1">
    <location>
        <position position="226"/>
    </location>
</feature>
<proteinExistence type="inferred from homology"/>
<reference key="1">
    <citation type="journal article" date="2004" name="Proc. Natl. Acad. Sci. U.S.A.">
        <title>Genome sequence of the enterobacterial phytopathogen Erwinia carotovora subsp. atroseptica and characterization of virulence factors.</title>
        <authorList>
            <person name="Bell K.S."/>
            <person name="Sebaihia M."/>
            <person name="Pritchard L."/>
            <person name="Holden M.T.G."/>
            <person name="Hyman L.J."/>
            <person name="Holeva M.C."/>
            <person name="Thomson N.R."/>
            <person name="Bentley S.D."/>
            <person name="Churcher L.J.C."/>
            <person name="Mungall K."/>
            <person name="Atkin R."/>
            <person name="Bason N."/>
            <person name="Brooks K."/>
            <person name="Chillingworth T."/>
            <person name="Clark K."/>
            <person name="Doggett J."/>
            <person name="Fraser A."/>
            <person name="Hance Z."/>
            <person name="Hauser H."/>
            <person name="Jagels K."/>
            <person name="Moule S."/>
            <person name="Norbertczak H."/>
            <person name="Ormond D."/>
            <person name="Price C."/>
            <person name="Quail M.A."/>
            <person name="Sanders M."/>
            <person name="Walker D."/>
            <person name="Whitehead S."/>
            <person name="Salmond G.P.C."/>
            <person name="Birch P.R.J."/>
            <person name="Parkhill J."/>
            <person name="Toth I.K."/>
        </authorList>
    </citation>
    <scope>NUCLEOTIDE SEQUENCE [LARGE SCALE GENOMIC DNA]</scope>
    <source>
        <strain>SCRI 1043 / ATCC BAA-672</strain>
    </source>
</reference>
<keyword id="KW-0963">Cytoplasm</keyword>
<keyword id="KW-0456">Lyase</keyword>
<keyword id="KW-0663">Pyridoxal phosphate</keyword>
<keyword id="KW-1185">Reference proteome</keyword>
<keyword id="KW-0808">Transferase</keyword>
<comment type="function">
    <text evidence="1">Cysteine desulfurases mobilize the sulfur from L-cysteine to yield L-alanine, an essential step in sulfur metabolism for biosynthesis of a variety of sulfur-containing biomolecules. Component of the suf operon, which is activated and required under specific conditions such as oxidative stress and iron limitation. Acts as a potent selenocysteine lyase in vitro, that mobilizes selenium from L-selenocysteine. Selenocysteine lyase activity is however unsure in vivo.</text>
</comment>
<comment type="catalytic activity">
    <reaction evidence="1">
        <text>(sulfur carrier)-H + L-cysteine = (sulfur carrier)-SH + L-alanine</text>
        <dbReference type="Rhea" id="RHEA:43892"/>
        <dbReference type="Rhea" id="RHEA-COMP:14737"/>
        <dbReference type="Rhea" id="RHEA-COMP:14739"/>
        <dbReference type="ChEBI" id="CHEBI:29917"/>
        <dbReference type="ChEBI" id="CHEBI:35235"/>
        <dbReference type="ChEBI" id="CHEBI:57972"/>
        <dbReference type="ChEBI" id="CHEBI:64428"/>
        <dbReference type="EC" id="2.8.1.7"/>
    </reaction>
</comment>
<comment type="catalytic activity">
    <reaction evidence="1">
        <text>L-selenocysteine + AH2 = hydrogenselenide + L-alanine + A + H(+)</text>
        <dbReference type="Rhea" id="RHEA:11632"/>
        <dbReference type="ChEBI" id="CHEBI:13193"/>
        <dbReference type="ChEBI" id="CHEBI:15378"/>
        <dbReference type="ChEBI" id="CHEBI:17499"/>
        <dbReference type="ChEBI" id="CHEBI:29317"/>
        <dbReference type="ChEBI" id="CHEBI:57843"/>
        <dbReference type="ChEBI" id="CHEBI:57972"/>
        <dbReference type="EC" id="4.4.1.16"/>
    </reaction>
</comment>
<comment type="cofactor">
    <cofactor evidence="1">
        <name>pyridoxal 5'-phosphate</name>
        <dbReference type="ChEBI" id="CHEBI:597326"/>
    </cofactor>
</comment>
<comment type="pathway">
    <text evidence="1">Cofactor biosynthesis; iron-sulfur cluster biosynthesis.</text>
</comment>
<comment type="subunit">
    <text evidence="1">Homodimer. Interacts with SufE and the SufBCD complex composed of SufB, SufC and SufD. The interaction with SufE is required to mediate the direct transfer of the sulfur atom from the S-sulfanylcysteine.</text>
</comment>
<comment type="subcellular location">
    <subcellularLocation>
        <location evidence="1">Cytoplasm</location>
    </subcellularLocation>
</comment>
<comment type="similarity">
    <text evidence="1">Belongs to the class-V pyridoxal-phosphate-dependent aminotransferase family. Csd subfamily.</text>
</comment>